<keyword id="KW-0002">3D-structure</keyword>
<keyword id="KW-0027">Amidation</keyword>
<keyword id="KW-0165">Cleavage on pair of basic residues</keyword>
<keyword id="KW-0903">Direct protein sequencing</keyword>
<keyword id="KW-0372">Hormone</keyword>
<keyword id="KW-1185">Reference proteome</keyword>
<keyword id="KW-0964">Secreted</keyword>
<keyword id="KW-0732">Signal</keyword>
<feature type="signal peptide" evidence="3">
    <location>
        <begin position="1"/>
        <end position="29"/>
    </location>
</feature>
<feature type="peptide" id="PRO_0000025355" description="Pancreatic polypeptide">
    <location>
        <begin position="30"/>
        <end position="65"/>
    </location>
</feature>
<feature type="peptide" id="PRO_0000025356" description="C-terminal peptide 1" evidence="2">
    <location>
        <begin position="69"/>
        <end position="89"/>
    </location>
</feature>
<feature type="peptide" id="PRO_0000025357" description="C-terminal peptide 2" evidence="2">
    <location>
        <begin position="93"/>
        <end position="131"/>
    </location>
</feature>
<feature type="modified residue" description="Tyrosine amide" evidence="3">
    <location>
        <position position="65"/>
    </location>
</feature>
<feature type="strand" evidence="7">
    <location>
        <begin position="38"/>
        <end position="40"/>
    </location>
</feature>
<feature type="helix" evidence="6">
    <location>
        <begin position="45"/>
        <end position="60"/>
    </location>
</feature>
<name>PAHO_BOVIN</name>
<comment type="function">
    <molecule>Pancreatic polypeptide</molecule>
    <text evidence="1">Hormone secreted by pancreatic cells that acts as a regulator of pancreatic and gastrointestinal functions probably by signaling through the G protein-coupled receptor NPY4R2.</text>
</comment>
<comment type="subcellular location">
    <subcellularLocation>
        <location evidence="1">Secreted</location>
    </subcellularLocation>
</comment>
<comment type="similarity">
    <text evidence="5">Belongs to the NPY family.</text>
</comment>
<reference key="1">
    <citation type="journal article" date="1995" name="Proc. Natl. Acad. Sci. U.S.A.">
        <title>Seminalplasmin: recent evolution of another member of the neuropeptide Y gene family.</title>
        <authorList>
            <person name="Herzog H."/>
            <person name="Hort Y."/>
            <person name="Schneider R."/>
            <person name="Shine J."/>
        </authorList>
    </citation>
    <scope>NUCLEOTIDE SEQUENCE [GENOMIC DNA]</scope>
</reference>
<reference key="2">
    <citation type="book" date="1979" name="Methods of hormone radioimmunoassay (2nd ed.)">
        <editorList>
            <person name="Jaffe B.M."/>
            <person name="Behrman H.R."/>
        </editorList>
        <authorList>
            <person name="Chance R.E."/>
            <person name="Moon N.E."/>
            <person name="Johnson M.G."/>
        </authorList>
    </citation>
    <scope>PROTEIN SEQUENCE OF 30-65</scope>
    <scope>AMIDATION AT TYR-65</scope>
</reference>
<reference key="3">
    <citation type="journal article" date="1992" name="Biochemistry">
        <title>Sequence-specific 1H NMR assignments and solution structure of bovine pancreatic polypeptide.</title>
        <authorList>
            <person name="Li X."/>
            <person name="Sutcliffe M.J."/>
            <person name="Schwartz T.W."/>
            <person name="Dodson C.M."/>
        </authorList>
    </citation>
    <scope>STRUCTURE BY NMR</scope>
</reference>
<accession>P01302</accession>
<gene>
    <name type="primary">PPY</name>
</gene>
<protein>
    <recommendedName>
        <fullName evidence="5">Pancreatic polypeptide prohormone</fullName>
    </recommendedName>
    <component>
        <recommendedName>
            <fullName evidence="4">Pancreatic polypeptide</fullName>
            <shortName evidence="4">PP</shortName>
        </recommendedName>
    </component>
    <component>
        <recommendedName>
            <fullName>C-terminal peptide 1</fullName>
        </recommendedName>
    </component>
    <component>
        <recommendedName>
            <fullName>C-terminal peptide 2</fullName>
        </recommendedName>
    </component>
</protein>
<proteinExistence type="evidence at protein level"/>
<dbReference type="EMBL" id="L33970">
    <property type="protein sequence ID" value="AAA98526.1"/>
    <property type="molecule type" value="Genomic_DNA"/>
</dbReference>
<dbReference type="PIR" id="A01570">
    <property type="entry name" value="PCBO"/>
</dbReference>
<dbReference type="PDB" id="1BBA">
    <property type="method" value="NMR"/>
    <property type="chains" value="A=30-65"/>
</dbReference>
<dbReference type="PDB" id="1LJV">
    <property type="method" value="NMR"/>
    <property type="chains" value="A=30-65"/>
</dbReference>
<dbReference type="PDB" id="1V1D">
    <property type="method" value="NMR"/>
    <property type="chains" value="A=30-60"/>
</dbReference>
<dbReference type="PDBsum" id="1BBA"/>
<dbReference type="PDBsum" id="1LJV"/>
<dbReference type="PDBsum" id="1V1D"/>
<dbReference type="BMRB" id="P01302"/>
<dbReference type="SMR" id="P01302"/>
<dbReference type="FunCoup" id="P01302">
    <property type="interactions" value="10"/>
</dbReference>
<dbReference type="STRING" id="9913.ENSBTAP00000040571"/>
<dbReference type="InParanoid" id="P01302"/>
<dbReference type="EvolutionaryTrace" id="P01302"/>
<dbReference type="Proteomes" id="UP000009136">
    <property type="component" value="Unplaced"/>
</dbReference>
<dbReference type="GO" id="GO:0005615">
    <property type="term" value="C:extracellular space"/>
    <property type="evidence" value="ECO:0000318"/>
    <property type="project" value="GO_Central"/>
</dbReference>
<dbReference type="GO" id="GO:0005184">
    <property type="term" value="F:neuropeptide hormone activity"/>
    <property type="evidence" value="ECO:0000318"/>
    <property type="project" value="GO_Central"/>
</dbReference>
<dbReference type="GO" id="GO:0031841">
    <property type="term" value="F:neuropeptide Y receptor binding"/>
    <property type="evidence" value="ECO:0000318"/>
    <property type="project" value="GO_Central"/>
</dbReference>
<dbReference type="GO" id="GO:0007631">
    <property type="term" value="P:feeding behavior"/>
    <property type="evidence" value="ECO:0000318"/>
    <property type="project" value="GO_Central"/>
</dbReference>
<dbReference type="GO" id="GO:0007218">
    <property type="term" value="P:neuropeptide signaling pathway"/>
    <property type="evidence" value="ECO:0000318"/>
    <property type="project" value="GO_Central"/>
</dbReference>
<dbReference type="CDD" id="cd00126">
    <property type="entry name" value="PAH"/>
    <property type="match status" value="1"/>
</dbReference>
<dbReference type="Gene3D" id="6.10.250.900">
    <property type="match status" value="1"/>
</dbReference>
<dbReference type="InterPro" id="IPR001955">
    <property type="entry name" value="Pancreatic_hormone-like"/>
</dbReference>
<dbReference type="InterPro" id="IPR020392">
    <property type="entry name" value="Pancreatic_hormone-like_CS"/>
</dbReference>
<dbReference type="PANTHER" id="PTHR10533">
    <property type="entry name" value="NEUROPEPTIDE Y/PANCREATIC HORMONE/PEPTIDE YY"/>
    <property type="match status" value="1"/>
</dbReference>
<dbReference type="PANTHER" id="PTHR10533:SF2">
    <property type="entry name" value="PANCREATIC POLYPEPTIDE PROHORMONE"/>
    <property type="match status" value="1"/>
</dbReference>
<dbReference type="Pfam" id="PF00159">
    <property type="entry name" value="Hormone_3"/>
    <property type="match status" value="1"/>
</dbReference>
<dbReference type="PRINTS" id="PR00278">
    <property type="entry name" value="PANCHORMONE"/>
</dbReference>
<dbReference type="SMART" id="SM00309">
    <property type="entry name" value="PAH"/>
    <property type="match status" value="1"/>
</dbReference>
<dbReference type="PROSITE" id="PS00265">
    <property type="entry name" value="PANCREATIC_HORMONE_1"/>
    <property type="match status" value="1"/>
</dbReference>
<dbReference type="PROSITE" id="PS50276">
    <property type="entry name" value="PANCREATIC_HORMONE_2"/>
    <property type="match status" value="1"/>
</dbReference>
<organism>
    <name type="scientific">Bos taurus</name>
    <name type="common">Bovine</name>
    <dbReference type="NCBI Taxonomy" id="9913"/>
    <lineage>
        <taxon>Eukaryota</taxon>
        <taxon>Metazoa</taxon>
        <taxon>Chordata</taxon>
        <taxon>Craniata</taxon>
        <taxon>Vertebrata</taxon>
        <taxon>Euteleostomi</taxon>
        <taxon>Mammalia</taxon>
        <taxon>Eutheria</taxon>
        <taxon>Laurasiatheria</taxon>
        <taxon>Artiodactyla</taxon>
        <taxon>Ruminantia</taxon>
        <taxon>Pecora</taxon>
        <taxon>Bovidae</taxon>
        <taxon>Bovinae</taxon>
        <taxon>Bos</taxon>
    </lineage>
</organism>
<sequence>MAAAHRCLFLLLLSTCVALLLQPPLGALGAPLEPEYPGDNATPEQMAQYAAELRRYINMLTRPRYGKRDKEGTLDFLECGSPHSAVPRYGKRDKEGTLDFLECGSPHSAVPRWVFSLSCVPRCLGQENGGV</sequence>
<evidence type="ECO:0000250" key="1">
    <source>
        <dbReference type="UniProtKB" id="P01298"/>
    </source>
</evidence>
<evidence type="ECO:0000255" key="2"/>
<evidence type="ECO:0000269" key="3">
    <source ref="2"/>
</evidence>
<evidence type="ECO:0000303" key="4">
    <source>
    </source>
</evidence>
<evidence type="ECO:0000305" key="5"/>
<evidence type="ECO:0007829" key="6">
    <source>
        <dbReference type="PDB" id="1BBA"/>
    </source>
</evidence>
<evidence type="ECO:0007829" key="7">
    <source>
        <dbReference type="PDB" id="1LJV"/>
    </source>
</evidence>